<gene>
    <name type="primary">lsm7</name>
    <name type="ORF">SPCC285.12</name>
</gene>
<reference key="1">
    <citation type="journal article" date="2002" name="Nature">
        <title>The genome sequence of Schizosaccharomyces pombe.</title>
        <authorList>
            <person name="Wood V."/>
            <person name="Gwilliam R."/>
            <person name="Rajandream M.A."/>
            <person name="Lyne M.H."/>
            <person name="Lyne R."/>
            <person name="Stewart A."/>
            <person name="Sgouros J.G."/>
            <person name="Peat N."/>
            <person name="Hayles J."/>
            <person name="Baker S.G."/>
            <person name="Basham D."/>
            <person name="Bowman S."/>
            <person name="Brooks K."/>
            <person name="Brown D."/>
            <person name="Brown S."/>
            <person name="Chillingworth T."/>
            <person name="Churcher C.M."/>
            <person name="Collins M."/>
            <person name="Connor R."/>
            <person name="Cronin A."/>
            <person name="Davis P."/>
            <person name="Feltwell T."/>
            <person name="Fraser A."/>
            <person name="Gentles S."/>
            <person name="Goble A."/>
            <person name="Hamlin N."/>
            <person name="Harris D.E."/>
            <person name="Hidalgo J."/>
            <person name="Hodgson G."/>
            <person name="Holroyd S."/>
            <person name="Hornsby T."/>
            <person name="Howarth S."/>
            <person name="Huckle E.J."/>
            <person name="Hunt S."/>
            <person name="Jagels K."/>
            <person name="James K.D."/>
            <person name="Jones L."/>
            <person name="Jones M."/>
            <person name="Leather S."/>
            <person name="McDonald S."/>
            <person name="McLean J."/>
            <person name="Mooney P."/>
            <person name="Moule S."/>
            <person name="Mungall K.L."/>
            <person name="Murphy L.D."/>
            <person name="Niblett D."/>
            <person name="Odell C."/>
            <person name="Oliver K."/>
            <person name="O'Neil S."/>
            <person name="Pearson D."/>
            <person name="Quail M.A."/>
            <person name="Rabbinowitsch E."/>
            <person name="Rutherford K.M."/>
            <person name="Rutter S."/>
            <person name="Saunders D."/>
            <person name="Seeger K."/>
            <person name="Sharp S."/>
            <person name="Skelton J."/>
            <person name="Simmonds M.N."/>
            <person name="Squares R."/>
            <person name="Squares S."/>
            <person name="Stevens K."/>
            <person name="Taylor K."/>
            <person name="Taylor R.G."/>
            <person name="Tivey A."/>
            <person name="Walsh S.V."/>
            <person name="Warren T."/>
            <person name="Whitehead S."/>
            <person name="Woodward J.R."/>
            <person name="Volckaert G."/>
            <person name="Aert R."/>
            <person name="Robben J."/>
            <person name="Grymonprez B."/>
            <person name="Weltjens I."/>
            <person name="Vanstreels E."/>
            <person name="Rieger M."/>
            <person name="Schaefer M."/>
            <person name="Mueller-Auer S."/>
            <person name="Gabel C."/>
            <person name="Fuchs M."/>
            <person name="Duesterhoeft A."/>
            <person name="Fritzc C."/>
            <person name="Holzer E."/>
            <person name="Moestl D."/>
            <person name="Hilbert H."/>
            <person name="Borzym K."/>
            <person name="Langer I."/>
            <person name="Beck A."/>
            <person name="Lehrach H."/>
            <person name="Reinhardt R."/>
            <person name="Pohl T.M."/>
            <person name="Eger P."/>
            <person name="Zimmermann W."/>
            <person name="Wedler H."/>
            <person name="Wambutt R."/>
            <person name="Purnelle B."/>
            <person name="Goffeau A."/>
            <person name="Cadieu E."/>
            <person name="Dreano S."/>
            <person name="Gloux S."/>
            <person name="Lelaure V."/>
            <person name="Mottier S."/>
            <person name="Galibert F."/>
            <person name="Aves S.J."/>
            <person name="Xiang Z."/>
            <person name="Hunt C."/>
            <person name="Moore K."/>
            <person name="Hurst S.M."/>
            <person name="Lucas M."/>
            <person name="Rochet M."/>
            <person name="Gaillardin C."/>
            <person name="Tallada V.A."/>
            <person name="Garzon A."/>
            <person name="Thode G."/>
            <person name="Daga R.R."/>
            <person name="Cruzado L."/>
            <person name="Jimenez J."/>
            <person name="Sanchez M."/>
            <person name="del Rey F."/>
            <person name="Benito J."/>
            <person name="Dominguez A."/>
            <person name="Revuelta J.L."/>
            <person name="Moreno S."/>
            <person name="Armstrong J."/>
            <person name="Forsburg S.L."/>
            <person name="Cerutti L."/>
            <person name="Lowe T."/>
            <person name="McCombie W.R."/>
            <person name="Paulsen I."/>
            <person name="Potashkin J."/>
            <person name="Shpakovski G.V."/>
            <person name="Ussery D."/>
            <person name="Barrell B.G."/>
            <person name="Nurse P."/>
        </authorList>
    </citation>
    <scope>NUCLEOTIDE SEQUENCE [LARGE SCALE GENOMIC DNA]</scope>
    <source>
        <strain>972 / ATCC 24843</strain>
    </source>
</reference>
<reference key="2">
    <citation type="journal article" date="2006" name="Nat. Biotechnol.">
        <title>ORFeome cloning and global analysis of protein localization in the fission yeast Schizosaccharomyces pombe.</title>
        <authorList>
            <person name="Matsuyama A."/>
            <person name="Arai R."/>
            <person name="Yashiroda Y."/>
            <person name="Shirai A."/>
            <person name="Kamata A."/>
            <person name="Sekido S."/>
            <person name="Kobayashi Y."/>
            <person name="Hashimoto A."/>
            <person name="Hamamoto M."/>
            <person name="Hiraoka Y."/>
            <person name="Horinouchi S."/>
            <person name="Yoshida M."/>
        </authorList>
    </citation>
    <scope>SUBCELLULAR LOCATION [LARGE SCALE ANALYSIS]</scope>
</reference>
<reference evidence="11" key="3">
    <citation type="journal article" date="2011" name="J. Mol. Biol.">
        <title>Structure of the LSm657 complex: an assembly intermediate of the LSm1-7 and LSm2-8 rings.</title>
        <authorList>
            <person name="Mund M."/>
            <person name="Neu A."/>
            <person name="Ullmann J."/>
            <person name="Neu U."/>
            <person name="Sprangers R."/>
        </authorList>
    </citation>
    <scope>X-RAY CRYSTALLOGRAPHY (2.50 ANGSTROMS)</scope>
    <scope>SUBUNIT</scope>
    <scope>IDENTIFICATION IN THE LSM1-LSM7 AND LSM2-LSM8 COMPLEXES</scope>
</reference>
<reference evidence="12" key="4">
    <citation type="journal article" date="2012" name="PLoS ONE">
        <title>Crystal structures of Lsm3, Lsm4 and Lsm5/6/7 from Schizosaccharomyces pombe.</title>
        <authorList>
            <person name="Wu D."/>
            <person name="Jiang S."/>
            <person name="Bowler M.W."/>
            <person name="Song H."/>
        </authorList>
    </citation>
    <scope>X-RAY CRYSTALLOGRAPHY (2.30 ANGSTROMS)</scope>
    <scope>FUNCTION</scope>
    <scope>SUBUNIT</scope>
    <scope>IDENTIFICATION IN THE LSM1-LSM7 AND LSM2-LSM8 COMPLEXES</scope>
</reference>
<reference evidence="13 14 15 16" key="5">
    <citation type="journal article" date="2020" name="RNA">
        <title>Molecular basis for the distinct cellular functions of the Lsm1-7 and Lsm2-8 complexes.</title>
        <authorList>
            <person name="Montemayor E.J."/>
            <person name="Virta J.M."/>
            <person name="Hayes S.M."/>
            <person name="Nomura Y."/>
            <person name="Brow D.A."/>
            <person name="Butcher S.E."/>
        </authorList>
    </citation>
    <scope>X-RAY CRYSTALLOGRAPHY (1.81 ANGSTROMS) IN COMPLEX WITH RNA</scope>
    <scope>FUNCTION</scope>
    <scope>SUBUNIT</scope>
    <scope>IDENTIFICATION IN THE LSM1-LSM7 AND LSM2-LSM8 COMPLEXES</scope>
</reference>
<proteinExistence type="evidence at protein level"/>
<organism>
    <name type="scientific">Schizosaccharomyces pombe (strain 972 / ATCC 24843)</name>
    <name type="common">Fission yeast</name>
    <dbReference type="NCBI Taxonomy" id="284812"/>
    <lineage>
        <taxon>Eukaryota</taxon>
        <taxon>Fungi</taxon>
        <taxon>Dikarya</taxon>
        <taxon>Ascomycota</taxon>
        <taxon>Taphrinomycotina</taxon>
        <taxon>Schizosaccharomycetes</taxon>
        <taxon>Schizosaccharomycetales</taxon>
        <taxon>Schizosaccharomycetaceae</taxon>
        <taxon>Schizosaccharomyces</taxon>
    </lineage>
</organism>
<sequence>MSSLQKRPGPGNSSQPTERPRKESILDLSRYQDQRIQATFTGGRQITGILKGFDQLMNLVLDDVEEQLRNPEDGKLTGAIRKLGLVVVRGTTLVLIAPMDGSEEIPNPFVQAE</sequence>
<evidence type="ECO:0000250" key="1">
    <source>
        <dbReference type="UniProtKB" id="P53905"/>
    </source>
</evidence>
<evidence type="ECO:0000255" key="2">
    <source>
        <dbReference type="PROSITE-ProRule" id="PRU01346"/>
    </source>
</evidence>
<evidence type="ECO:0000256" key="3">
    <source>
        <dbReference type="SAM" id="MobiDB-lite"/>
    </source>
</evidence>
<evidence type="ECO:0000269" key="4">
    <source>
    </source>
</evidence>
<evidence type="ECO:0000269" key="5">
    <source>
    </source>
</evidence>
<evidence type="ECO:0000269" key="6">
    <source>
    </source>
</evidence>
<evidence type="ECO:0000269" key="7">
    <source>
    </source>
</evidence>
<evidence type="ECO:0000305" key="8"/>
<evidence type="ECO:0000305" key="9">
    <source>
    </source>
</evidence>
<evidence type="ECO:0000305" key="10">
    <source>
    </source>
</evidence>
<evidence type="ECO:0007744" key="11">
    <source>
        <dbReference type="PDB" id="3SWN"/>
    </source>
</evidence>
<evidence type="ECO:0007744" key="12">
    <source>
        <dbReference type="PDB" id="4EMK"/>
    </source>
</evidence>
<evidence type="ECO:0007744" key="13">
    <source>
        <dbReference type="PDB" id="6PPN"/>
    </source>
</evidence>
<evidence type="ECO:0007744" key="14">
    <source>
        <dbReference type="PDB" id="6PPP"/>
    </source>
</evidence>
<evidence type="ECO:0007744" key="15">
    <source>
        <dbReference type="PDB" id="6PPQ"/>
    </source>
</evidence>
<evidence type="ECO:0007744" key="16">
    <source>
        <dbReference type="PDB" id="6PPV"/>
    </source>
</evidence>
<evidence type="ECO:0007829" key="17">
    <source>
        <dbReference type="PDB" id="6PPQ"/>
    </source>
</evidence>
<dbReference type="EMBL" id="CU329672">
    <property type="protein sequence ID" value="CAA20851.1"/>
    <property type="molecule type" value="Genomic_DNA"/>
</dbReference>
<dbReference type="PIR" id="T41258">
    <property type="entry name" value="T41258"/>
</dbReference>
<dbReference type="RefSeq" id="NP_588340.1">
    <property type="nucleotide sequence ID" value="NM_001023331.2"/>
</dbReference>
<dbReference type="PDB" id="3SWN">
    <property type="method" value="X-ray"/>
    <property type="resolution" value="2.50 A"/>
    <property type="chains" value="C/F/O/R=1-113"/>
</dbReference>
<dbReference type="PDB" id="4EMK">
    <property type="method" value="X-ray"/>
    <property type="resolution" value="2.30 A"/>
    <property type="chains" value="C=1-113"/>
</dbReference>
<dbReference type="PDB" id="6PPN">
    <property type="method" value="X-ray"/>
    <property type="resolution" value="1.91 A"/>
    <property type="chains" value="G/O=1-113"/>
</dbReference>
<dbReference type="PDB" id="6PPP">
    <property type="method" value="X-ray"/>
    <property type="resolution" value="2.33 A"/>
    <property type="chains" value="G/O=1-113"/>
</dbReference>
<dbReference type="PDB" id="6PPQ">
    <property type="method" value="X-ray"/>
    <property type="resolution" value="1.81 A"/>
    <property type="chains" value="G=1-113"/>
</dbReference>
<dbReference type="PDB" id="6PPV">
    <property type="method" value="X-ray"/>
    <property type="resolution" value="2.05 A"/>
    <property type="chains" value="G=1-113"/>
</dbReference>
<dbReference type="PDBsum" id="3SWN"/>
<dbReference type="PDBsum" id="4EMK"/>
<dbReference type="PDBsum" id="6PPN"/>
<dbReference type="PDBsum" id="6PPP"/>
<dbReference type="PDBsum" id="6PPQ"/>
<dbReference type="PDBsum" id="6PPV"/>
<dbReference type="BMRB" id="O74499"/>
<dbReference type="SMR" id="O74499"/>
<dbReference type="BioGRID" id="275538">
    <property type="interactions" value="9"/>
</dbReference>
<dbReference type="FunCoup" id="O74499">
    <property type="interactions" value="495"/>
</dbReference>
<dbReference type="STRING" id="284812.O74499"/>
<dbReference type="iPTMnet" id="O74499"/>
<dbReference type="PaxDb" id="4896-SPCC285.12.1"/>
<dbReference type="EnsemblFungi" id="SPCC285.12.1">
    <property type="protein sequence ID" value="SPCC285.12.1:pep"/>
    <property type="gene ID" value="SPCC285.12"/>
</dbReference>
<dbReference type="GeneID" id="2538964"/>
<dbReference type="KEGG" id="spo:2538964"/>
<dbReference type="PomBase" id="SPCC285.12">
    <property type="gene designation" value="lsm7"/>
</dbReference>
<dbReference type="VEuPathDB" id="FungiDB:SPCC285.12"/>
<dbReference type="eggNOG" id="KOG1781">
    <property type="taxonomic scope" value="Eukaryota"/>
</dbReference>
<dbReference type="HOGENOM" id="CLU_076902_3_1_1"/>
<dbReference type="InParanoid" id="O74499"/>
<dbReference type="OMA" id="PFVQQEE"/>
<dbReference type="PhylomeDB" id="O74499"/>
<dbReference type="Reactome" id="R-SPO-430039">
    <property type="pathway name" value="mRNA decay by 5' to 3' exoribonuclease"/>
</dbReference>
<dbReference type="EvolutionaryTrace" id="O74499"/>
<dbReference type="PRO" id="PR:O74499"/>
<dbReference type="Proteomes" id="UP000002485">
    <property type="component" value="Chromosome III"/>
</dbReference>
<dbReference type="GO" id="GO:0071013">
    <property type="term" value="C:catalytic step 2 spliceosome"/>
    <property type="evidence" value="ECO:0000318"/>
    <property type="project" value="GO_Central"/>
</dbReference>
<dbReference type="GO" id="GO:0005829">
    <property type="term" value="C:cytosol"/>
    <property type="evidence" value="ECO:0007005"/>
    <property type="project" value="PomBase"/>
</dbReference>
<dbReference type="GO" id="GO:1990726">
    <property type="term" value="C:Lsm1-7-Pat1 complex"/>
    <property type="evidence" value="ECO:0000269"/>
    <property type="project" value="PomBase"/>
</dbReference>
<dbReference type="GO" id="GO:0120115">
    <property type="term" value="C:Lsm2-8 complex"/>
    <property type="evidence" value="ECO:0000269"/>
    <property type="project" value="PomBase"/>
</dbReference>
<dbReference type="GO" id="GO:0005634">
    <property type="term" value="C:nucleus"/>
    <property type="evidence" value="ECO:0007005"/>
    <property type="project" value="PomBase"/>
</dbReference>
<dbReference type="GO" id="GO:0097526">
    <property type="term" value="C:spliceosomal tri-snRNP complex"/>
    <property type="evidence" value="ECO:0000318"/>
    <property type="project" value="GO_Central"/>
</dbReference>
<dbReference type="GO" id="GO:0005697">
    <property type="term" value="C:telomerase holoenzyme complex"/>
    <property type="evidence" value="ECO:0000269"/>
    <property type="project" value="PomBase"/>
</dbReference>
<dbReference type="GO" id="GO:0005686">
    <property type="term" value="C:U2 snRNP"/>
    <property type="evidence" value="ECO:0000269"/>
    <property type="project" value="PomBase"/>
</dbReference>
<dbReference type="GO" id="GO:0071004">
    <property type="term" value="C:U2-type prespliceosome"/>
    <property type="evidence" value="ECO:0000318"/>
    <property type="project" value="GO_Central"/>
</dbReference>
<dbReference type="GO" id="GO:0046540">
    <property type="term" value="C:U4/U6 x U5 tri-snRNP complex"/>
    <property type="evidence" value="ECO:0000266"/>
    <property type="project" value="PomBase"/>
</dbReference>
<dbReference type="GO" id="GO:0005682">
    <property type="term" value="C:U5 snRNP"/>
    <property type="evidence" value="ECO:0000314"/>
    <property type="project" value="PomBase"/>
</dbReference>
<dbReference type="GO" id="GO:0005688">
    <property type="term" value="C:U6 snRNP"/>
    <property type="evidence" value="ECO:0000269"/>
    <property type="project" value="PomBase"/>
</dbReference>
<dbReference type="GO" id="GO:0008266">
    <property type="term" value="F:poly(U) RNA binding"/>
    <property type="evidence" value="ECO:0000314"/>
    <property type="project" value="PomBase"/>
</dbReference>
<dbReference type="GO" id="GO:0030620">
    <property type="term" value="F:U2 snRNA binding"/>
    <property type="evidence" value="ECO:0000314"/>
    <property type="project" value="PomBase"/>
</dbReference>
<dbReference type="GO" id="GO:0045292">
    <property type="term" value="P:mRNA cis splicing, via spliceosome"/>
    <property type="evidence" value="ECO:0000266"/>
    <property type="project" value="PomBase"/>
</dbReference>
<dbReference type="GO" id="GO:0000956">
    <property type="term" value="P:nuclear-transcribed mRNA catabolic process"/>
    <property type="evidence" value="ECO:0007669"/>
    <property type="project" value="InterPro"/>
</dbReference>
<dbReference type="GO" id="GO:0006364">
    <property type="term" value="P:rRNA processing"/>
    <property type="evidence" value="ECO:0007669"/>
    <property type="project" value="UniProtKB-KW"/>
</dbReference>
<dbReference type="GO" id="GO:1905323">
    <property type="term" value="P:telomerase holoenzyme complex assembly"/>
    <property type="evidence" value="ECO:0000304"/>
    <property type="project" value="PomBase"/>
</dbReference>
<dbReference type="GO" id="GO:0008033">
    <property type="term" value="P:tRNA processing"/>
    <property type="evidence" value="ECO:0007669"/>
    <property type="project" value="UniProtKB-KW"/>
</dbReference>
<dbReference type="CDD" id="cd01729">
    <property type="entry name" value="LSm7"/>
    <property type="match status" value="1"/>
</dbReference>
<dbReference type="DisProt" id="DP02067"/>
<dbReference type="FunFam" id="2.30.30.100:FF:000043">
    <property type="entry name" value="U6 snRNA-associated Sm-like protein LSm7"/>
    <property type="match status" value="1"/>
</dbReference>
<dbReference type="Gene3D" id="2.30.30.100">
    <property type="match status" value="1"/>
</dbReference>
<dbReference type="InterPro" id="IPR017132">
    <property type="entry name" value="Lsm7"/>
</dbReference>
<dbReference type="InterPro" id="IPR044641">
    <property type="entry name" value="Lsm7/SmG-like"/>
</dbReference>
<dbReference type="InterPro" id="IPR010920">
    <property type="entry name" value="LSM_dom_sf"/>
</dbReference>
<dbReference type="InterPro" id="IPR047575">
    <property type="entry name" value="Sm"/>
</dbReference>
<dbReference type="InterPro" id="IPR001163">
    <property type="entry name" value="Sm_dom_euk/arc"/>
</dbReference>
<dbReference type="PANTHER" id="PTHR10553">
    <property type="entry name" value="SMALL NUCLEAR RIBONUCLEOPROTEIN"/>
    <property type="match status" value="1"/>
</dbReference>
<dbReference type="PANTHER" id="PTHR10553:SF5">
    <property type="entry name" value="U6 SNRNA-ASSOCIATED SM-LIKE PROTEIN LSM7"/>
    <property type="match status" value="1"/>
</dbReference>
<dbReference type="Pfam" id="PF01423">
    <property type="entry name" value="LSM"/>
    <property type="match status" value="1"/>
</dbReference>
<dbReference type="PIRSF" id="PIRSF037188">
    <property type="entry name" value="U6_snRNA_Lsm7"/>
    <property type="match status" value="1"/>
</dbReference>
<dbReference type="SMART" id="SM00651">
    <property type="entry name" value="Sm"/>
    <property type="match status" value="1"/>
</dbReference>
<dbReference type="SUPFAM" id="SSF50182">
    <property type="entry name" value="Sm-like ribonucleoproteins"/>
    <property type="match status" value="1"/>
</dbReference>
<dbReference type="PROSITE" id="PS52002">
    <property type="entry name" value="SM"/>
    <property type="match status" value="1"/>
</dbReference>
<protein>
    <recommendedName>
        <fullName evidence="8">LSM complex subunit lsm7</fullName>
    </recommendedName>
</protein>
<comment type="function">
    <text evidence="1 6 7">Component of LSm protein complexes, which are involved in RNA processing and may function in a chaperone-like manner (PubMed:22615807, PubMed:32518066). Component of the cytoplasmic LSM1-LSM7 complex which is involved in mRNA degradation by activating the decapping step (PubMed:32518066). The LSM1-LSM7 complex loads onto the 3'-end of single stranded RNA (PubMed:32518066). Component of the nuclear LSM2-LSM8 complex, which is involved in spliceosome assembly (PubMed:32518066). The LSM2-LSM8 complex plays a role in the biogenesis of the spliceosomal U4/U6-U5 tri-snRNP complex by accelerating prp24-mediated annealing of U4/U6 di-snRNA (By similarity). The LSM2-LSM8 complex binds U6 snRNA terminating with a cyclic 2',3' phosphate group; RNA with an unmodified 3' hydroxyl or non-cyclic 3' phosphate is bound less tightly (PubMed:32518066).</text>
</comment>
<comment type="subunit">
    <text evidence="5 6 7 9 10">Component of the heptameric LSM1-LSM7 complex that forms a seven-membered ring structure with a donut shape (Probable) (PubMed:32518066). The LSm subunits are arranged in the order lsm1, lsm2, lsm3, lsm6, lsm5, lsm7 and lsm4 (PubMed:22001694, PubMed:22615807, PubMed:32518066). Component of the heptameric LSM2-LSM8 complex that forms a seven-membered ring structure with a donut shape (Probable) (PubMed:32518066). The LSm subunits are arranged in the order lsm8, lsm2, lsm3, lsm6, lsm5, lsm7 and lsm4 (PubMed:22001694, PubMed:22615807, PubMed:32518066).</text>
</comment>
<comment type="subcellular location">
    <subcellularLocation>
        <location evidence="4">Cytoplasm</location>
    </subcellularLocation>
    <subcellularLocation>
        <location evidence="4">Nucleus</location>
    </subcellularLocation>
</comment>
<comment type="similarity">
    <text evidence="8">Belongs to the snRNP Sm proteins family.</text>
</comment>
<accession>O74499</accession>
<feature type="chain" id="PRO_0000317308" description="LSM complex subunit lsm7">
    <location>
        <begin position="1"/>
        <end position="113"/>
    </location>
</feature>
<feature type="domain" description="Sm" evidence="2">
    <location>
        <begin position="23"/>
        <end position="102"/>
    </location>
</feature>
<feature type="region of interest" description="Disordered" evidence="3">
    <location>
        <begin position="1"/>
        <end position="23"/>
    </location>
</feature>
<feature type="compositionally biased region" description="Polar residues" evidence="3">
    <location>
        <begin position="1"/>
        <end position="17"/>
    </location>
</feature>
<feature type="helix" evidence="17">
    <location>
        <begin position="28"/>
        <end position="31"/>
    </location>
</feature>
<feature type="strand" evidence="17">
    <location>
        <begin position="34"/>
        <end position="40"/>
    </location>
</feature>
<feature type="strand" evidence="17">
    <location>
        <begin position="45"/>
        <end position="53"/>
    </location>
</feature>
<feature type="strand" evidence="17">
    <location>
        <begin position="59"/>
        <end position="69"/>
    </location>
</feature>
<feature type="turn" evidence="17">
    <location>
        <begin position="71"/>
        <end position="73"/>
    </location>
</feature>
<feature type="strand" evidence="17">
    <location>
        <begin position="76"/>
        <end position="88"/>
    </location>
</feature>
<feature type="turn" evidence="17">
    <location>
        <begin position="90"/>
        <end position="92"/>
    </location>
</feature>
<feature type="strand" evidence="17">
    <location>
        <begin position="93"/>
        <end position="99"/>
    </location>
</feature>
<feature type="strand" evidence="17">
    <location>
        <begin position="103"/>
        <end position="105"/>
    </location>
</feature>
<keyword id="KW-0002">3D-structure</keyword>
<keyword id="KW-0963">Cytoplasm</keyword>
<keyword id="KW-0507">mRNA processing</keyword>
<keyword id="KW-0508">mRNA splicing</keyword>
<keyword id="KW-0539">Nucleus</keyword>
<keyword id="KW-1185">Reference proteome</keyword>
<keyword id="KW-0687">Ribonucleoprotein</keyword>
<keyword id="KW-0694">RNA-binding</keyword>
<keyword id="KW-0698">rRNA processing</keyword>
<keyword id="KW-0747">Spliceosome</keyword>
<keyword id="KW-0819">tRNA processing</keyword>
<name>LSM7_SCHPO</name>